<keyword id="KW-0328">Glycosyltransferase</keyword>
<keyword id="KW-0460">Magnesium</keyword>
<keyword id="KW-0665">Pyrimidine biosynthesis</keyword>
<keyword id="KW-0808">Transferase</keyword>
<sequence>MAKEIAKSLLDIEAVTLSPNDLYTWSSGIKSPIYCDNRVTLGYPLVRGAIRDGLINLIKEHFPEVEVISGTATAGIPHAAFIAEKLKLPMNYVRSSNKSHGKQNQIEGAKSEGKKVVVIEDLISTGGSSVTAVEALKLAGAEVLGVVAIFTYGLKKADDTFSNIQLPFYTLSDYSELIEVAENEGKISSEDIQTLVEWRDNLA</sequence>
<feature type="chain" id="PRO_0000110740" description="Orotate phosphoribosyltransferase">
    <location>
        <begin position="1"/>
        <end position="203"/>
    </location>
</feature>
<feature type="binding site" evidence="1">
    <location>
        <position position="94"/>
    </location>
    <ligand>
        <name>5-phospho-alpha-D-ribose 1-diphosphate</name>
        <dbReference type="ChEBI" id="CHEBI:58017"/>
        <note>ligand shared between dimeric partners</note>
    </ligand>
</feature>
<feature type="binding site" evidence="1">
    <location>
        <position position="98"/>
    </location>
    <ligand>
        <name>5-phospho-alpha-D-ribose 1-diphosphate</name>
        <dbReference type="ChEBI" id="CHEBI:58017"/>
        <note>ligand shared between dimeric partners</note>
    </ligand>
</feature>
<feature type="binding site" evidence="1">
    <location>
        <position position="100"/>
    </location>
    <ligand>
        <name>5-phospho-alpha-D-ribose 1-diphosphate</name>
        <dbReference type="ChEBI" id="CHEBI:58017"/>
        <note>ligand shared between dimeric partners</note>
    </ligand>
</feature>
<feature type="binding site" description="in other chain" evidence="1">
    <location>
        <begin position="120"/>
        <end position="128"/>
    </location>
    <ligand>
        <name>5-phospho-alpha-D-ribose 1-diphosphate</name>
        <dbReference type="ChEBI" id="CHEBI:58017"/>
        <note>ligand shared between dimeric partners</note>
    </ligand>
</feature>
<feature type="binding site" evidence="1">
    <location>
        <position position="124"/>
    </location>
    <ligand>
        <name>orotate</name>
        <dbReference type="ChEBI" id="CHEBI:30839"/>
    </ligand>
</feature>
<comment type="function">
    <text evidence="1">Catalyzes the transfer of a ribosyl phosphate group from 5-phosphoribose 1-diphosphate to orotate, leading to the formation of orotidine monophosphate (OMP).</text>
</comment>
<comment type="catalytic activity">
    <reaction evidence="1">
        <text>orotidine 5'-phosphate + diphosphate = orotate + 5-phospho-alpha-D-ribose 1-diphosphate</text>
        <dbReference type="Rhea" id="RHEA:10380"/>
        <dbReference type="ChEBI" id="CHEBI:30839"/>
        <dbReference type="ChEBI" id="CHEBI:33019"/>
        <dbReference type="ChEBI" id="CHEBI:57538"/>
        <dbReference type="ChEBI" id="CHEBI:58017"/>
        <dbReference type="EC" id="2.4.2.10"/>
    </reaction>
</comment>
<comment type="cofactor">
    <cofactor evidence="1">
        <name>Mg(2+)</name>
        <dbReference type="ChEBI" id="CHEBI:18420"/>
    </cofactor>
</comment>
<comment type="pathway">
    <text evidence="1">Pyrimidine metabolism; UMP biosynthesis via de novo pathway; UMP from orotate: step 1/2.</text>
</comment>
<comment type="subunit">
    <text evidence="1">Homodimer.</text>
</comment>
<comment type="similarity">
    <text evidence="1">Belongs to the purine/pyrimidine phosphoribosyltransferase family. PyrE subfamily.</text>
</comment>
<gene>
    <name evidence="1" type="primary">pyrE</name>
    <name type="ordered locus">SAS1139</name>
</gene>
<evidence type="ECO:0000255" key="1">
    <source>
        <dbReference type="HAMAP-Rule" id="MF_01208"/>
    </source>
</evidence>
<dbReference type="EC" id="2.4.2.10" evidence="1"/>
<dbReference type="EMBL" id="BX571857">
    <property type="protein sequence ID" value="CAG42916.1"/>
    <property type="molecule type" value="Genomic_DNA"/>
</dbReference>
<dbReference type="RefSeq" id="WP_001040246.1">
    <property type="nucleotide sequence ID" value="NC_002953.3"/>
</dbReference>
<dbReference type="SMR" id="Q6GA08"/>
<dbReference type="KEGG" id="sas:SAS1139"/>
<dbReference type="HOGENOM" id="CLU_074878_1_1_9"/>
<dbReference type="UniPathway" id="UPA00070">
    <property type="reaction ID" value="UER00119"/>
</dbReference>
<dbReference type="GO" id="GO:0000287">
    <property type="term" value="F:magnesium ion binding"/>
    <property type="evidence" value="ECO:0007669"/>
    <property type="project" value="UniProtKB-UniRule"/>
</dbReference>
<dbReference type="GO" id="GO:0004588">
    <property type="term" value="F:orotate phosphoribosyltransferase activity"/>
    <property type="evidence" value="ECO:0007669"/>
    <property type="project" value="UniProtKB-UniRule"/>
</dbReference>
<dbReference type="GO" id="GO:0044205">
    <property type="term" value="P:'de novo' UMP biosynthetic process"/>
    <property type="evidence" value="ECO:0007669"/>
    <property type="project" value="UniProtKB-UniRule"/>
</dbReference>
<dbReference type="GO" id="GO:0019856">
    <property type="term" value="P:pyrimidine nucleobase biosynthetic process"/>
    <property type="evidence" value="ECO:0007669"/>
    <property type="project" value="TreeGrafter"/>
</dbReference>
<dbReference type="CDD" id="cd06223">
    <property type="entry name" value="PRTases_typeI"/>
    <property type="match status" value="1"/>
</dbReference>
<dbReference type="Gene3D" id="3.40.50.2020">
    <property type="match status" value="1"/>
</dbReference>
<dbReference type="HAMAP" id="MF_01208">
    <property type="entry name" value="PyrE"/>
    <property type="match status" value="1"/>
</dbReference>
<dbReference type="InterPro" id="IPR023031">
    <property type="entry name" value="OPRT"/>
</dbReference>
<dbReference type="InterPro" id="IPR004467">
    <property type="entry name" value="Or_phspho_trans_dom"/>
</dbReference>
<dbReference type="InterPro" id="IPR000836">
    <property type="entry name" value="PRibTrfase_dom"/>
</dbReference>
<dbReference type="InterPro" id="IPR029057">
    <property type="entry name" value="PRTase-like"/>
</dbReference>
<dbReference type="NCBIfam" id="TIGR00336">
    <property type="entry name" value="pyrE"/>
    <property type="match status" value="1"/>
</dbReference>
<dbReference type="PANTHER" id="PTHR19278">
    <property type="entry name" value="OROTATE PHOSPHORIBOSYLTRANSFERASE"/>
    <property type="match status" value="1"/>
</dbReference>
<dbReference type="PANTHER" id="PTHR19278:SF9">
    <property type="entry name" value="URIDINE 5'-MONOPHOSPHATE SYNTHASE"/>
    <property type="match status" value="1"/>
</dbReference>
<dbReference type="Pfam" id="PF00156">
    <property type="entry name" value="Pribosyltran"/>
    <property type="match status" value="1"/>
</dbReference>
<dbReference type="SUPFAM" id="SSF53271">
    <property type="entry name" value="PRTase-like"/>
    <property type="match status" value="1"/>
</dbReference>
<dbReference type="PROSITE" id="PS00103">
    <property type="entry name" value="PUR_PYR_PR_TRANSFER"/>
    <property type="match status" value="1"/>
</dbReference>
<organism>
    <name type="scientific">Staphylococcus aureus (strain MSSA476)</name>
    <dbReference type="NCBI Taxonomy" id="282459"/>
    <lineage>
        <taxon>Bacteria</taxon>
        <taxon>Bacillati</taxon>
        <taxon>Bacillota</taxon>
        <taxon>Bacilli</taxon>
        <taxon>Bacillales</taxon>
        <taxon>Staphylococcaceae</taxon>
        <taxon>Staphylococcus</taxon>
    </lineage>
</organism>
<protein>
    <recommendedName>
        <fullName evidence="1">Orotate phosphoribosyltransferase</fullName>
        <shortName evidence="1">OPRT</shortName>
        <shortName evidence="1">OPRTase</shortName>
        <ecNumber evidence="1">2.4.2.10</ecNumber>
    </recommendedName>
</protein>
<name>PYRE_STAAS</name>
<proteinExistence type="inferred from homology"/>
<reference key="1">
    <citation type="journal article" date="2004" name="Proc. Natl. Acad. Sci. U.S.A.">
        <title>Complete genomes of two clinical Staphylococcus aureus strains: evidence for the rapid evolution of virulence and drug resistance.</title>
        <authorList>
            <person name="Holden M.T.G."/>
            <person name="Feil E.J."/>
            <person name="Lindsay J.A."/>
            <person name="Peacock S.J."/>
            <person name="Day N.P.J."/>
            <person name="Enright M.C."/>
            <person name="Foster T.J."/>
            <person name="Moore C.E."/>
            <person name="Hurst L."/>
            <person name="Atkin R."/>
            <person name="Barron A."/>
            <person name="Bason N."/>
            <person name="Bentley S.D."/>
            <person name="Chillingworth C."/>
            <person name="Chillingworth T."/>
            <person name="Churcher C."/>
            <person name="Clark L."/>
            <person name="Corton C."/>
            <person name="Cronin A."/>
            <person name="Doggett J."/>
            <person name="Dowd L."/>
            <person name="Feltwell T."/>
            <person name="Hance Z."/>
            <person name="Harris B."/>
            <person name="Hauser H."/>
            <person name="Holroyd S."/>
            <person name="Jagels K."/>
            <person name="James K.D."/>
            <person name="Lennard N."/>
            <person name="Line A."/>
            <person name="Mayes R."/>
            <person name="Moule S."/>
            <person name="Mungall K."/>
            <person name="Ormond D."/>
            <person name="Quail M.A."/>
            <person name="Rabbinowitsch E."/>
            <person name="Rutherford K.M."/>
            <person name="Sanders M."/>
            <person name="Sharp S."/>
            <person name="Simmonds M."/>
            <person name="Stevens K."/>
            <person name="Whitehead S."/>
            <person name="Barrell B.G."/>
            <person name="Spratt B.G."/>
            <person name="Parkhill J."/>
        </authorList>
    </citation>
    <scope>NUCLEOTIDE SEQUENCE [LARGE SCALE GENOMIC DNA]</scope>
    <source>
        <strain>MSSA476</strain>
    </source>
</reference>
<accession>Q6GA08</accession>